<reference key="1">
    <citation type="journal article" date="1995" name="J. Mol. Evol.">
        <title>Mammalian mitochondrial DNA evolution: a comparison of the cytochrome b and cytochrome c oxidase II genes.</title>
        <authorList>
            <person name="Honeycutt R.L."/>
            <person name="Nedbal M.A."/>
            <person name="Adkins R.M."/>
            <person name="Janecek L.L."/>
        </authorList>
    </citation>
    <scope>NUCLEOTIDE SEQUENCE [GENOMIC DNA]</scope>
</reference>
<reference key="2">
    <citation type="journal article" date="1998" name="J. Mol. Evol.">
        <title>The complete mitochondrial DNA sequence of the pig (Sus scrofa).</title>
        <authorList>
            <person name="Ursing B.M."/>
            <person name="Arnason U."/>
        </authorList>
    </citation>
    <scope>NUCLEOTIDE SEQUENCE [GENOMIC DNA]</scope>
</reference>
<reference key="3">
    <citation type="journal article" date="1999" name="Gene">
        <title>Complete nucleotide sequence of pig (Sus scrofa) mitochondrial genome and dating evolutionary divergence within artiodactyla.</title>
        <authorList>
            <person name="Lin C.S."/>
            <person name="Sun Y.L."/>
            <person name="Liu C.Y."/>
            <person name="Yang P.C."/>
            <person name="Chang L.C."/>
            <person name="Cheng I.C."/>
            <person name="Mao S.J.T."/>
            <person name="Huang M.C."/>
        </authorList>
    </citation>
    <scope>NUCLEOTIDE SEQUENCE [LARGE SCALE GENOMIC DNA]</scope>
    <source>
        <strain>Landrace</strain>
    </source>
</reference>
<name>COX2_PIG</name>
<organism>
    <name type="scientific">Sus scrofa</name>
    <name type="common">Pig</name>
    <dbReference type="NCBI Taxonomy" id="9823"/>
    <lineage>
        <taxon>Eukaryota</taxon>
        <taxon>Metazoa</taxon>
        <taxon>Chordata</taxon>
        <taxon>Craniata</taxon>
        <taxon>Vertebrata</taxon>
        <taxon>Euteleostomi</taxon>
        <taxon>Mammalia</taxon>
        <taxon>Eutheria</taxon>
        <taxon>Laurasiatheria</taxon>
        <taxon>Artiodactyla</taxon>
        <taxon>Suina</taxon>
        <taxon>Suidae</taxon>
        <taxon>Sus</taxon>
    </lineage>
</organism>
<sequence>MAYPFQLGFQDATSPIMEELLHFHDHTLMIVFLISSLVLYIISLMLTTKLTHTSTMDAQEVETIWTILPAIILILIALPSLRILYMMDEINNPALTVKTMGHQWYWSYEYTDYEDLTFDSYMIPTSDLKPGEMRLLEVDNRVVLPMEMTIRMLVSSEDVLHSWAVPSLGLKTDAIPGRLNQTTLMSTRPGLYYGQCSEICGSNHSFMPIVLELVPLKYFEKWSTSMLT</sequence>
<comment type="function">
    <text evidence="3">Component of the cytochrome c oxidase, the last enzyme in the mitochondrial electron transport chain which drives oxidative phosphorylation. The respiratory chain contains 3 multisubunit complexes succinate dehydrogenase (complex II, CII), ubiquinol-cytochrome c oxidoreductase (cytochrome b-c1 complex, complex III, CIII) and cytochrome c oxidase (complex IV, CIV), that cooperate to transfer electrons derived from NADH and succinate to molecular oxygen, creating an electrochemical gradient over the inner membrane that drives transmembrane transport and the ATP synthase. Cytochrome c oxidase is the component of the respiratory chain that catalyzes the reduction of oxygen to water. Electrons originating from reduced cytochrome c in the intermembrane space (IMS) are transferred via the dinuclear copper A center (CU(A)) of subunit 2 and heme A of subunit 1 to the active site in subunit 1, a binuclear center (BNC) formed by heme A3 and copper B (CU(B)). The BNC reduces molecular oxygen to 2 water molecules using 4 electrons from cytochrome c in the IMS and 4 protons from the mitochondrial matrix.</text>
</comment>
<comment type="catalytic activity">
    <reaction evidence="3">
        <text>4 Fe(II)-[cytochrome c] + O2 + 8 H(+)(in) = 4 Fe(III)-[cytochrome c] + 2 H2O + 4 H(+)(out)</text>
        <dbReference type="Rhea" id="RHEA:11436"/>
        <dbReference type="Rhea" id="RHEA-COMP:10350"/>
        <dbReference type="Rhea" id="RHEA-COMP:14399"/>
        <dbReference type="ChEBI" id="CHEBI:15377"/>
        <dbReference type="ChEBI" id="CHEBI:15378"/>
        <dbReference type="ChEBI" id="CHEBI:15379"/>
        <dbReference type="ChEBI" id="CHEBI:29033"/>
        <dbReference type="ChEBI" id="CHEBI:29034"/>
        <dbReference type="EC" id="7.1.1.9"/>
    </reaction>
    <physiologicalReaction direction="left-to-right" evidence="3">
        <dbReference type="Rhea" id="RHEA:11437"/>
    </physiologicalReaction>
</comment>
<comment type="cofactor">
    <cofactor evidence="4">
        <name>Cu cation</name>
        <dbReference type="ChEBI" id="CHEBI:23378"/>
    </cofactor>
    <text evidence="4">Binds a dinuclear copper A center per subunit.</text>
</comment>
<comment type="subunit">
    <text evidence="1 4">Component of the cytochrome c oxidase (complex IV, CIV), a multisubunit enzyme composed of 14 subunits. The complex is composed of a catalytic core of 3 subunits MT-CO1, MT-CO2 and MT-CO3, encoded in the mitochondrial DNA, and 11 supernumerary subunits COX4I, COX5A, COX5B, COX6A, COX6B, COX6C, COX7A, COX7B, COX7C, COX8 and NDUFA4, which are encoded in the nuclear genome. The complex exists as a monomer or a dimer and forms supercomplexes (SCs) in the inner mitochondrial membrane with NADH-ubiquinone oxidoreductase (complex I, CI) and ubiquinol-cytochrome c oxidoreductase (cytochrome b-c1 complex, complex III, CIII), resulting in different assemblies (supercomplex SCI(1)III(2)IV(1) and megacomplex MCI(2)III(2)IV(2)) (By similarity). Found in a complex with TMEM177, COA6, COX18, COX20, SCO1 and SCO2. Interacts with TMEM177 in a COX20-dependent manner. Interacts with COX20. Interacts with COX16 (By similarity).</text>
</comment>
<comment type="subcellular location">
    <subcellularLocation>
        <location evidence="4">Mitochondrion inner membrane</location>
        <topology evidence="4">Multi-pass membrane protein</topology>
    </subcellularLocation>
</comment>
<comment type="similarity">
    <text evidence="5">Belongs to the cytochrome c oxidase subunit 2 family.</text>
</comment>
<comment type="sequence caution" evidence="5">
    <conflict type="erroneous initiation">
        <sequence resource="EMBL-CDS" id="CAA05232"/>
    </conflict>
</comment>
<keyword id="KW-0002">3D-structure</keyword>
<keyword id="KW-0186">Copper</keyword>
<keyword id="KW-0249">Electron transport</keyword>
<keyword id="KW-0460">Magnesium</keyword>
<keyword id="KW-0472">Membrane</keyword>
<keyword id="KW-0479">Metal-binding</keyword>
<keyword id="KW-0496">Mitochondrion</keyword>
<keyword id="KW-0999">Mitochondrion inner membrane</keyword>
<keyword id="KW-0597">Phosphoprotein</keyword>
<keyword id="KW-1185">Reference proteome</keyword>
<keyword id="KW-0679">Respiratory chain</keyword>
<keyword id="KW-1278">Translocase</keyword>
<keyword id="KW-0812">Transmembrane</keyword>
<keyword id="KW-1133">Transmembrane helix</keyword>
<keyword id="KW-0813">Transport</keyword>
<dbReference type="EC" id="7.1.1.9"/>
<dbReference type="EMBL" id="U18827">
    <property type="protein sequence ID" value="AAA75622.1"/>
    <property type="molecule type" value="Genomic_DNA"/>
</dbReference>
<dbReference type="EMBL" id="AJ002189">
    <property type="protein sequence ID" value="CAA05232.1"/>
    <property type="status" value="ALT_INIT"/>
    <property type="molecule type" value="Genomic_DNA"/>
</dbReference>
<dbReference type="EMBL" id="AF034253">
    <property type="protein sequence ID" value="AAD34188.1"/>
    <property type="molecule type" value="Genomic_DNA"/>
</dbReference>
<dbReference type="PIR" id="T10975">
    <property type="entry name" value="T10975"/>
</dbReference>
<dbReference type="RefSeq" id="NP_008637.1">
    <property type="nucleotide sequence ID" value="NC_000845.1"/>
</dbReference>
<dbReference type="PDB" id="8UGI">
    <property type="method" value="EM"/>
    <property type="resolution" value="2.10 A"/>
    <property type="chains" value="4B=1-227"/>
</dbReference>
<dbReference type="PDBsum" id="8UGI"/>
<dbReference type="EMDB" id="EMD-42226"/>
<dbReference type="SMR" id="P50667"/>
<dbReference type="FunCoup" id="P50667">
    <property type="interactions" value="113"/>
</dbReference>
<dbReference type="STRING" id="9823.ENSSSCP00000019138"/>
<dbReference type="PaxDb" id="9823-ENSSSCP00000019138"/>
<dbReference type="PeptideAtlas" id="P50667"/>
<dbReference type="GeneID" id="808504"/>
<dbReference type="KEGG" id="ssc:808504"/>
<dbReference type="CTD" id="4513"/>
<dbReference type="eggNOG" id="KOG4767">
    <property type="taxonomic scope" value="Eukaryota"/>
</dbReference>
<dbReference type="HOGENOM" id="CLU_036876_2_3_1"/>
<dbReference type="InParanoid" id="P50667"/>
<dbReference type="OMA" id="WSYEYTD"/>
<dbReference type="OrthoDB" id="539285at2759"/>
<dbReference type="Proteomes" id="UP000008227">
    <property type="component" value="Mitochondrion"/>
</dbReference>
<dbReference type="Proteomes" id="UP000314985">
    <property type="component" value="Mitochondrion"/>
</dbReference>
<dbReference type="Proteomes" id="UP000694570">
    <property type="component" value="Unplaced"/>
</dbReference>
<dbReference type="Proteomes" id="UP000694571">
    <property type="component" value="Unplaced"/>
</dbReference>
<dbReference type="Proteomes" id="UP000694720">
    <property type="component" value="Unplaced"/>
</dbReference>
<dbReference type="Proteomes" id="UP000694722">
    <property type="component" value="Unplaced"/>
</dbReference>
<dbReference type="Proteomes" id="UP000694723">
    <property type="component" value="Unplaced"/>
</dbReference>
<dbReference type="Proteomes" id="UP000694724">
    <property type="component" value="Unplaced"/>
</dbReference>
<dbReference type="Proteomes" id="UP000694725">
    <property type="component" value="Unplaced"/>
</dbReference>
<dbReference type="Proteomes" id="UP000694726">
    <property type="component" value="Unplaced"/>
</dbReference>
<dbReference type="Proteomes" id="UP000694727">
    <property type="component" value="Unplaced"/>
</dbReference>
<dbReference type="Proteomes" id="UP000694728">
    <property type="component" value="Unplaced"/>
</dbReference>
<dbReference type="GO" id="GO:0005743">
    <property type="term" value="C:mitochondrial inner membrane"/>
    <property type="evidence" value="ECO:0007669"/>
    <property type="project" value="UniProtKB-SubCell"/>
</dbReference>
<dbReference type="GO" id="GO:0045277">
    <property type="term" value="C:respiratory chain complex IV"/>
    <property type="evidence" value="ECO:0000250"/>
    <property type="project" value="UniProtKB"/>
</dbReference>
<dbReference type="GO" id="GO:0005507">
    <property type="term" value="F:copper ion binding"/>
    <property type="evidence" value="ECO:0007669"/>
    <property type="project" value="InterPro"/>
</dbReference>
<dbReference type="GO" id="GO:0004129">
    <property type="term" value="F:cytochrome-c oxidase activity"/>
    <property type="evidence" value="ECO:0007669"/>
    <property type="project" value="UniProtKB-EC"/>
</dbReference>
<dbReference type="GO" id="GO:0042773">
    <property type="term" value="P:ATP synthesis coupled electron transport"/>
    <property type="evidence" value="ECO:0000318"/>
    <property type="project" value="GO_Central"/>
</dbReference>
<dbReference type="CDD" id="cd13912">
    <property type="entry name" value="CcO_II_C"/>
    <property type="match status" value="1"/>
</dbReference>
<dbReference type="FunFam" id="1.10.287.90:FF:000001">
    <property type="entry name" value="Cytochrome c oxidase subunit 2"/>
    <property type="match status" value="1"/>
</dbReference>
<dbReference type="FunFam" id="2.60.40.420:FF:000001">
    <property type="entry name" value="Cytochrome c oxidase subunit 2"/>
    <property type="match status" value="1"/>
</dbReference>
<dbReference type="Gene3D" id="1.10.287.90">
    <property type="match status" value="1"/>
</dbReference>
<dbReference type="Gene3D" id="2.60.40.420">
    <property type="entry name" value="Cupredoxins - blue copper proteins"/>
    <property type="match status" value="1"/>
</dbReference>
<dbReference type="InterPro" id="IPR045187">
    <property type="entry name" value="CcO_II"/>
</dbReference>
<dbReference type="InterPro" id="IPR002429">
    <property type="entry name" value="CcO_II-like_C"/>
</dbReference>
<dbReference type="InterPro" id="IPR034210">
    <property type="entry name" value="CcO_II_C"/>
</dbReference>
<dbReference type="InterPro" id="IPR001505">
    <property type="entry name" value="Copper_CuA"/>
</dbReference>
<dbReference type="InterPro" id="IPR008972">
    <property type="entry name" value="Cupredoxin"/>
</dbReference>
<dbReference type="InterPro" id="IPR014222">
    <property type="entry name" value="Cyt_c_oxidase_su2"/>
</dbReference>
<dbReference type="InterPro" id="IPR011759">
    <property type="entry name" value="Cyt_c_oxidase_su2_TM_dom"/>
</dbReference>
<dbReference type="InterPro" id="IPR036257">
    <property type="entry name" value="Cyt_c_oxidase_su2_TM_sf"/>
</dbReference>
<dbReference type="NCBIfam" id="TIGR02866">
    <property type="entry name" value="CoxB"/>
    <property type="match status" value="1"/>
</dbReference>
<dbReference type="PANTHER" id="PTHR22888:SF9">
    <property type="entry name" value="CYTOCHROME C OXIDASE SUBUNIT 2"/>
    <property type="match status" value="1"/>
</dbReference>
<dbReference type="PANTHER" id="PTHR22888">
    <property type="entry name" value="CYTOCHROME C OXIDASE, SUBUNIT II"/>
    <property type="match status" value="1"/>
</dbReference>
<dbReference type="Pfam" id="PF00116">
    <property type="entry name" value="COX2"/>
    <property type="match status" value="1"/>
</dbReference>
<dbReference type="Pfam" id="PF02790">
    <property type="entry name" value="COX2_TM"/>
    <property type="match status" value="1"/>
</dbReference>
<dbReference type="PRINTS" id="PR01166">
    <property type="entry name" value="CYCOXIDASEII"/>
</dbReference>
<dbReference type="SUPFAM" id="SSF49503">
    <property type="entry name" value="Cupredoxins"/>
    <property type="match status" value="1"/>
</dbReference>
<dbReference type="SUPFAM" id="SSF81464">
    <property type="entry name" value="Cytochrome c oxidase subunit II-like, transmembrane region"/>
    <property type="match status" value="1"/>
</dbReference>
<dbReference type="PROSITE" id="PS00078">
    <property type="entry name" value="COX2"/>
    <property type="match status" value="1"/>
</dbReference>
<dbReference type="PROSITE" id="PS50857">
    <property type="entry name" value="COX2_CUA"/>
    <property type="match status" value="1"/>
</dbReference>
<dbReference type="PROSITE" id="PS50999">
    <property type="entry name" value="COX2_TM"/>
    <property type="match status" value="1"/>
</dbReference>
<feature type="chain" id="PRO_0000183662" description="Cytochrome c oxidase subunit 2">
    <location>
        <begin position="1"/>
        <end position="228"/>
    </location>
</feature>
<feature type="topological domain" description="Mitochondrial intermembrane" evidence="4">
    <location>
        <begin position="1"/>
        <end position="14"/>
    </location>
</feature>
<feature type="transmembrane region" description="Helical; Name=I" evidence="4">
    <location>
        <begin position="15"/>
        <end position="45"/>
    </location>
</feature>
<feature type="topological domain" description="Mitochondrial matrix" evidence="4">
    <location>
        <begin position="46"/>
        <end position="59"/>
    </location>
</feature>
<feature type="transmembrane region" description="Helical; Name=II" evidence="4">
    <location>
        <begin position="60"/>
        <end position="87"/>
    </location>
</feature>
<feature type="topological domain" description="Mitochondrial intermembrane" evidence="4">
    <location>
        <begin position="88"/>
        <end position="228"/>
    </location>
</feature>
<feature type="binding site" evidence="4">
    <location>
        <position position="161"/>
    </location>
    <ligand>
        <name>Cu cation</name>
        <dbReference type="ChEBI" id="CHEBI:23378"/>
        <label>A1</label>
    </ligand>
</feature>
<feature type="binding site" evidence="4">
    <location>
        <position position="196"/>
    </location>
    <ligand>
        <name>Cu cation</name>
        <dbReference type="ChEBI" id="CHEBI:23378"/>
        <label>A1</label>
    </ligand>
</feature>
<feature type="binding site" evidence="4">
    <location>
        <position position="196"/>
    </location>
    <ligand>
        <name>Cu cation</name>
        <dbReference type="ChEBI" id="CHEBI:23378"/>
        <label>A2</label>
    </ligand>
</feature>
<feature type="binding site" evidence="4">
    <location>
        <position position="198"/>
    </location>
    <ligand>
        <name>Cu cation</name>
        <dbReference type="ChEBI" id="CHEBI:23378"/>
        <label>A2</label>
    </ligand>
</feature>
<feature type="binding site" evidence="4">
    <location>
        <position position="198"/>
    </location>
    <ligand>
        <name>Mg(2+)</name>
        <dbReference type="ChEBI" id="CHEBI:18420"/>
        <note>ligand shared with MT-CO1</note>
    </ligand>
</feature>
<feature type="binding site" evidence="4">
    <location>
        <position position="200"/>
    </location>
    <ligand>
        <name>Cu cation</name>
        <dbReference type="ChEBI" id="CHEBI:23378"/>
        <label>A1</label>
    </ligand>
</feature>
<feature type="binding site" evidence="4">
    <location>
        <position position="200"/>
    </location>
    <ligand>
        <name>Cu cation</name>
        <dbReference type="ChEBI" id="CHEBI:23378"/>
        <label>A2</label>
    </ligand>
</feature>
<feature type="binding site" evidence="4">
    <location>
        <position position="204"/>
    </location>
    <ligand>
        <name>Cu cation</name>
        <dbReference type="ChEBI" id="CHEBI:23378"/>
        <label>A2</label>
    </ligand>
</feature>
<feature type="binding site" evidence="4">
    <location>
        <position position="207"/>
    </location>
    <ligand>
        <name>Cu cation</name>
        <dbReference type="ChEBI" id="CHEBI:23378"/>
        <label>A1</label>
    </ligand>
</feature>
<feature type="modified residue" description="Phosphotyrosine" evidence="2">
    <location>
        <position position="218"/>
    </location>
</feature>
<feature type="sequence conflict" description="In Ref. 3; AAD34188." evidence="5" ref="3">
    <original>T</original>
    <variation>TG</variation>
    <location>
        <position position="228"/>
    </location>
</feature>
<proteinExistence type="evidence at protein level"/>
<gene>
    <name type="primary">MT-CO2</name>
    <name type="synonym">COII</name>
    <name type="synonym">COX2</name>
    <name type="synonym">COXII</name>
    <name type="synonym">MTCO2</name>
</gene>
<geneLocation type="mitochondrion"/>
<accession>P50667</accession>
<accession>Q9TDR3</accession>
<protein>
    <recommendedName>
        <fullName>Cytochrome c oxidase subunit 2</fullName>
        <ecNumber>7.1.1.9</ecNumber>
    </recommendedName>
    <alternativeName>
        <fullName>Cytochrome c oxidase polypeptide II</fullName>
    </alternativeName>
</protein>
<evidence type="ECO:0000250" key="1">
    <source>
        <dbReference type="UniProtKB" id="P00403"/>
    </source>
</evidence>
<evidence type="ECO:0000250" key="2">
    <source>
        <dbReference type="UniProtKB" id="P00406"/>
    </source>
</evidence>
<evidence type="ECO:0000250" key="3">
    <source>
        <dbReference type="UniProtKB" id="P00410"/>
    </source>
</evidence>
<evidence type="ECO:0000250" key="4">
    <source>
        <dbReference type="UniProtKB" id="P68530"/>
    </source>
</evidence>
<evidence type="ECO:0000305" key="5"/>